<protein>
    <recommendedName>
        <fullName evidence="18">BBSome complex member BBS1</fullName>
    </recommendedName>
    <alternativeName>
        <fullName>BBS2-like protein 2</fullName>
    </alternativeName>
    <alternativeName>
        <fullName>Bardet-Biedl syndrome 1 protein</fullName>
    </alternativeName>
</protein>
<proteinExistence type="evidence at protein level"/>
<organism>
    <name type="scientific">Homo sapiens</name>
    <name type="common">Human</name>
    <dbReference type="NCBI Taxonomy" id="9606"/>
    <lineage>
        <taxon>Eukaryota</taxon>
        <taxon>Metazoa</taxon>
        <taxon>Chordata</taxon>
        <taxon>Craniata</taxon>
        <taxon>Vertebrata</taxon>
        <taxon>Euteleostomi</taxon>
        <taxon>Mammalia</taxon>
        <taxon>Eutheria</taxon>
        <taxon>Euarchontoglires</taxon>
        <taxon>Primates</taxon>
        <taxon>Haplorrhini</taxon>
        <taxon>Catarrhini</taxon>
        <taxon>Hominidae</taxon>
        <taxon>Homo</taxon>
    </lineage>
</organism>
<comment type="function">
    <text evidence="1 9 14">The BBSome complex is thought to function as a coat complex required for sorting of specific membrane proteins to the primary cilia. The BBSome complex is required for ciliogenesis but is dispensable for centriolar satellite function. This ciliogenic function is mediated in part by the Rab8 GDP/GTP exchange factor, which localizes to the basal body and contacts the BBSome. Rab8(GTP) enters the primary cilium and promotes extension of the ciliary membrane. Firstly the BBSome associates with the ciliary membrane and binds to RAB3IP/Rabin8, the guanosyl exchange factor (GEF) for Rab8 and then the Rab8-GTP localizes to the cilium and promotes docking and fusion of carrier vesicles to the base of the ciliary membrane. The BBSome complex, together with the LTZL1, controls SMO ciliary trafficking and contributes to the sonic hedgehog (SHH) pathway regulation. Required for proper BBSome complex assembly and its ciliary localization (PubMed:17574030, PubMed:22072986). Plays a role in olfactory cilium biogenesis/maintenance and trafficking (By similarity).</text>
</comment>
<comment type="subunit">
    <text evidence="8 9 10 14 15">Part of BBSome complex, that contains BBS1, BBS2, BBS4, BBS5, BBS7, BBS8/TTC8, BBS9 and BBIP10. Interacts with the C-terminus of RAB3IP. Interacts with CCDC28B and ALDOB. Interacts with PKD1 (PubMed:24939912).</text>
</comment>
<comment type="interaction">
    <interactant intactId="EBI-1805484">
        <id>Q8NFJ9</id>
    </interactant>
    <interactant intactId="EBI-1045507">
        <id>P05062</id>
        <label>ALDOB</label>
    </interactant>
    <organismsDiffer>false</organismsDiffer>
    <experiments>4</experiments>
</comment>
<comment type="interaction">
    <interactant intactId="EBI-1805484">
        <id>Q8NFJ9</id>
    </interactant>
    <interactant intactId="EBI-2891949">
        <id>Q9H0F7</id>
        <label>ARL6</label>
    </interactant>
    <organismsDiffer>false</organismsDiffer>
    <experiments>4</experiments>
</comment>
<comment type="interaction">
    <interactant intactId="EBI-1805484">
        <id>Q8NFJ9</id>
    </interactant>
    <interactant intactId="EBI-16127759">
        <id>Q9H0F7-1</id>
        <label>ARL6</label>
    </interactant>
    <organismsDiffer>false</organismsDiffer>
    <experiments>3</experiments>
</comment>
<comment type="interaction">
    <interactant intactId="EBI-1805484">
        <id>Q8NFJ9</id>
    </interactant>
    <interactant intactId="EBI-748297">
        <id>Q9BXC9</id>
        <label>BBS2</label>
    </interactant>
    <organismsDiffer>false</organismsDiffer>
    <experiments>9</experiments>
</comment>
<comment type="interaction">
    <interactant intactId="EBI-1805484">
        <id>Q8NFJ9</id>
    </interactant>
    <interactant intactId="EBI-1805814">
        <id>Q96RK4</id>
        <label>BBS4</label>
    </interactant>
    <organismsDiffer>false</organismsDiffer>
    <experiments>10</experiments>
</comment>
<comment type="interaction">
    <interactant intactId="EBI-1805484">
        <id>Q8NFJ9</id>
    </interactant>
    <interactant intactId="EBI-1806001">
        <id>Q8IWZ6</id>
        <label>BBS7</label>
    </interactant>
    <organismsDiffer>false</organismsDiffer>
    <experiments>10</experiments>
</comment>
<comment type="interaction">
    <interactant intactId="EBI-1805484">
        <id>Q8NFJ9</id>
    </interactant>
    <interactant intactId="EBI-2826852">
        <id>Q3SYG4</id>
        <label>BBS9</label>
    </interactant>
    <organismsDiffer>false</organismsDiffer>
    <experiments>14</experiments>
</comment>
<comment type="interaction">
    <interactant intactId="EBI-1805484">
        <id>Q8NFJ9</id>
    </interactant>
    <interactant intactId="EBI-25840379">
        <id>Q14203-5</id>
        <label>DCTN1</label>
    </interactant>
    <organismsDiffer>false</organismsDiffer>
    <experiments>3</experiments>
</comment>
<comment type="interaction">
    <interactant intactId="EBI-1805484">
        <id>Q8NFJ9</id>
    </interactant>
    <interactant intactId="EBI-352162">
        <id>P68104</id>
        <label>EEF1A1</label>
    </interactant>
    <organismsDiffer>false</organismsDiffer>
    <experiments>3</experiments>
</comment>
<comment type="interaction">
    <interactant intactId="EBI-1805484">
        <id>Q8NFJ9</id>
    </interactant>
    <interactant intactId="EBI-2805823">
        <id>Q15051</id>
        <label>IQCB1</label>
    </interactant>
    <organismsDiffer>false</organismsDiffer>
    <experiments>4</experiments>
</comment>
<comment type="interaction">
    <interactant intactId="EBI-1805484">
        <id>Q8NFJ9</id>
    </interactant>
    <interactant intactId="EBI-1164361">
        <id>Q99497</id>
        <label>PARK7</label>
    </interactant>
    <organismsDiffer>false</organismsDiffer>
    <experiments>4</experiments>
</comment>
<comment type="interaction">
    <interactant intactId="EBI-1805484">
        <id>Q8NFJ9</id>
    </interactant>
    <interactant intactId="EBI-741421">
        <id>Q15154</id>
        <label>PCM1</label>
    </interactant>
    <organismsDiffer>false</organismsDiffer>
    <experiments>2</experiments>
</comment>
<comment type="interaction">
    <interactant intactId="EBI-1805484">
        <id>Q8NFJ9</id>
    </interactant>
    <interactant intactId="EBI-747860">
        <id>Q96QF0-1</id>
        <label>RAB3IP</label>
    </interactant>
    <organismsDiffer>false</organismsDiffer>
    <experiments>2</experiments>
</comment>
<comment type="interaction">
    <interactant intactId="EBI-1805484">
        <id>Q8NFJ9</id>
    </interactant>
    <interactant intactId="EBI-6143588">
        <id>P48356-1</id>
        <label>Lepr</label>
    </interactant>
    <organismsDiffer>true</organismsDiffer>
    <experiments>3</experiments>
</comment>
<comment type="subcellular location">
    <subcellularLocation>
        <location>Cell projection</location>
        <location>Cilium membrane</location>
    </subcellularLocation>
    <subcellularLocation>
        <location>Cytoplasm</location>
    </subcellularLocation>
    <subcellularLocation>
        <location>Cytoplasm</location>
        <location>Cytoskeleton</location>
        <location>Microtubule organizing center</location>
        <location>Centrosome</location>
        <location>Centriolar satellite</location>
    </subcellularLocation>
</comment>
<comment type="alternative products">
    <event type="alternative splicing"/>
    <isoform>
        <id>Q8NFJ9-1</id>
        <name>1</name>
        <sequence type="displayed"/>
    </isoform>
    <isoform>
        <id>Q8NFJ9-2</id>
        <name>3</name>
        <name>DPP3-BBS1</name>
        <sequence type="described" ref="VSP_008854"/>
    </isoform>
    <isoform>
        <id>Q8NFJ9-3</id>
        <name>2</name>
        <sequence type="described" ref="VSP_054152 VSP_054153"/>
    </isoform>
</comment>
<comment type="tissue specificity">
    <text>Highly expressed in the kidney. Also found in fetal tissue, testis, retina, adipose tissue, heart, skeletal muscle and pancreas.</text>
</comment>
<comment type="disease">
    <text>Ciliary dysfunction leads to a broad spectrum of disorders, collectively termed ciliopathies. Overlapping clinical features include retinal degeneration, renal cystic disease, skeletal abnormalities, fibrosis of various organ, and a complex range of anatomical and functional defects of the central and peripheral nervous system. The ciliopathy range of diseases includes Meckel-Gruber syndrome, Bardet-Biedl syndrome, Joubert syndrome, nephronophtisis, Senior-Loken syndrome, and Jeune asphyxiating thoracic dystrophy among others. Single-locus allelism is insufficient to explain the variable penetrance and expressivity of such disorders, leading to the suggestion that variations across multiple sites of the ciliary proteome, including BBS1, influence the clinical outcome.</text>
</comment>
<comment type="disease" evidence="2 3 4 5 6 7 11 13">
    <disease id="DI-00159">
        <name>Bardet-Biedl syndrome 1</name>
        <acronym>BBS1</acronym>
        <description>A syndrome characterized by usually severe pigmentary retinopathy, early-onset obesity, polydactyly, hypogenitalism, renal malformation and intellectual disability. Secondary features include diabetes mellitus, hypertension and congenital heart disease. Bardet-Biedl syndrome inheritance is autosomal recessive, but three mutated alleles (two at one locus, and a third at a second locus) may be required for clinical manifestation of some forms of the disease.</description>
        <dbReference type="MIM" id="209900"/>
    </disease>
    <text>The disease is caused by variants affecting the gene represented in this entry.</text>
</comment>
<comment type="miscellaneous">
    <molecule>Isoform 3</molecule>
    <text evidence="18">Based on a readthrough transcript which may produce a DPP3-BBS1 fusion protein.</text>
</comment>
<keyword id="KW-0002">3D-structure</keyword>
<keyword id="KW-0007">Acetylation</keyword>
<keyword id="KW-0025">Alternative splicing</keyword>
<keyword id="KW-0083">Bardet-Biedl syndrome</keyword>
<keyword id="KW-1003">Cell membrane</keyword>
<keyword id="KW-0966">Cell projection</keyword>
<keyword id="KW-1186">Ciliopathy</keyword>
<keyword id="KW-0969">Cilium</keyword>
<keyword id="KW-0970">Cilium biogenesis/degradation</keyword>
<keyword id="KW-0963">Cytoplasm</keyword>
<keyword id="KW-0206">Cytoskeleton</keyword>
<keyword id="KW-0225">Disease variant</keyword>
<keyword id="KW-0991">Intellectual disability</keyword>
<keyword id="KW-0472">Membrane</keyword>
<keyword id="KW-0550">Obesity</keyword>
<keyword id="KW-0552">Olfaction</keyword>
<keyword id="KW-0653">Protein transport</keyword>
<keyword id="KW-1267">Proteomics identification</keyword>
<keyword id="KW-1185">Reference proteome</keyword>
<keyword id="KW-0716">Sensory transduction</keyword>
<keyword id="KW-0813">Transport</keyword>
<keyword id="KW-0844">Vision</keyword>
<feature type="initiator methionine" description="Removed" evidence="19">
    <location>
        <position position="1"/>
    </location>
</feature>
<feature type="chain" id="PRO_0000064841" description="BBSome complex member BBS1">
    <location>
        <begin position="2"/>
        <end position="593"/>
    </location>
</feature>
<feature type="modified residue" description="N-acetylalanine" evidence="19">
    <location>
        <position position="2"/>
    </location>
</feature>
<feature type="splice variant" id="VSP_008854" description="In isoform 3." evidence="16 17">
    <original>MAAASSSDSDACGAES</original>
    <variation>MDPSWRRSSHSWPQPMPDSGRAPVRPHLAKLEEDVWPCPQFHQTKAASGPPFV</variation>
    <location>
        <begin position="1"/>
        <end position="16"/>
    </location>
</feature>
<feature type="splice variant" id="VSP_054152" description="In isoform 2." evidence="18">
    <location>
        <begin position="242"/>
        <end position="370"/>
    </location>
</feature>
<feature type="splice variant" id="VSP_054153" description="In isoform 2." evidence="18">
    <original>LVLREGQSAPLLSAHVNMPGSEGLAAA</original>
    <variation>GPALVPRGR</variation>
    <location>
        <begin position="567"/>
        <end position="593"/>
    </location>
</feature>
<feature type="sequence variant" id="VAR_038880" description="In BBS1; dbSNP:rs775990952." evidence="5">
    <original>H</original>
    <variation>R</variation>
    <location>
        <position position="35"/>
    </location>
</feature>
<feature type="sequence variant" id="VAR_038881" description="In BBS1; dbSNP:rs766602837." evidence="5">
    <original>K</original>
    <variation>E</variation>
    <location>
        <position position="53"/>
    </location>
</feature>
<feature type="sequence variant" id="VAR_038882" description="In BBS1; dbSNP:rs200688985." evidence="5">
    <original>D</original>
    <variation>N</variation>
    <location>
        <position position="148"/>
    </location>
</feature>
<feature type="sequence variant" id="VAR_038883" description="In BBS1; dbSNP:rs376894444." evidence="7 13">
    <original>R</original>
    <variation>Q</variation>
    <location>
        <position position="160"/>
    </location>
</feature>
<feature type="sequence variant" id="VAR_017214" description="In BBS1." evidence="3">
    <location>
        <begin position="200"/>
        <end position="201"/>
    </location>
</feature>
<feature type="sequence variant" id="VAR_066485" description="In a patient with Bardet-Biedl syndrome; dbSNP:rs146052054." evidence="11">
    <original>L</original>
    <variation>V</variation>
    <location>
        <position position="206"/>
    </location>
</feature>
<feature type="sequence variant" id="VAR_017215" description="In BBS1; dbSNP:rs35520756." evidence="4 5">
    <original>E</original>
    <variation>K</variation>
    <location>
        <position position="234"/>
    </location>
</feature>
<feature type="sequence variant" id="VAR_066486" description="In a patient with Bardet-Biedl syndrome; dbSNP:rs151203205." evidence="11">
    <original>P</original>
    <variation>L</variation>
    <location>
        <position position="245"/>
    </location>
</feature>
<feature type="sequence variant" id="VAR_038884" description="In BBS1; dbSNP:rs942862410." evidence="5">
    <original>G</original>
    <variation>S</variation>
    <location>
        <position position="305"/>
    </location>
</feature>
<feature type="sequence variant" id="VAR_066278" description="In BBS1." evidence="13">
    <original>I</original>
    <variation>T</variation>
    <location>
        <position position="330"/>
    </location>
</feature>
<feature type="sequence variant" id="VAR_038885" description="In BBS1." evidence="5">
    <location>
        <position position="389"/>
    </location>
</feature>
<feature type="sequence variant" id="VAR_017216" description="In BBS1; dbSNP:rs113624356." evidence="2 3 5 6 7 11 13">
    <original>M</original>
    <variation>R</variation>
    <location>
        <position position="390"/>
    </location>
</feature>
<feature type="sequence variant" id="VAR_038886" description="In BBS1." evidence="5">
    <original>Y</original>
    <variation>S</variation>
    <location>
        <position position="434"/>
    </location>
</feature>
<feature type="sequence variant" id="VAR_038887" description="In BBS1; dbSNP:rs778225393." evidence="5">
    <original>L</original>
    <variation>H</variation>
    <location>
        <position position="503"/>
    </location>
</feature>
<feature type="sequence variant" id="VAR_017217" description="In BBS1; dbSNP:rs121917778." evidence="3 6">
    <original>L</original>
    <variation>P</variation>
    <location>
        <position position="518"/>
    </location>
</feature>
<feature type="sequence variant" id="VAR_038888" description="In BBS1." evidence="5">
    <original>L</original>
    <variation>Q</variation>
    <location>
        <position position="518"/>
    </location>
</feature>
<feature type="sequence variant" id="VAR_066279" description="In BBS1; dbSNP:rs863224782." evidence="13">
    <location>
        <position position="524"/>
    </location>
</feature>
<feature type="sequence variant" id="VAR_065554" description="In a patient with Meckel-Gruber like syndrome also carrying L-753 in TTC21B and a variant in CC2D2A; dbSNP:rs544767888." evidence="12">
    <original>G</original>
    <variation>D</variation>
    <location>
        <position position="559"/>
    </location>
</feature>
<name>BBS1_HUMAN</name>
<accession>Q8NFJ9</accession>
<accession>Q32MM9</accession>
<accession>Q32MN0</accession>
<accession>Q96SN4</accession>
<reference key="1">
    <citation type="journal article" date="2002" name="Nat. Genet.">
        <title>Identification of the gene (BBS1) most commonly involved in Bardet-Biedl syndrome, a complex human obesity syndrome.</title>
        <authorList>
            <person name="Mykytyn K."/>
            <person name="Nishimura D.Y."/>
            <person name="Searby C.C."/>
            <person name="Shastri M."/>
            <person name="Yen H."/>
            <person name="Beck J.S."/>
            <person name="Braun T."/>
            <person name="Streb L.M."/>
            <person name="Cornier A.S."/>
            <person name="Cox G.F."/>
            <person name="Fulton A.B."/>
            <person name="Carmi R."/>
            <person name="Lueleci G."/>
            <person name="Chandrasekharappa S.C."/>
            <person name="Collins F.S."/>
            <person name="Jacobson S.G."/>
            <person name="Heckenlively J.R."/>
            <person name="Weleber R.G."/>
            <person name="Stone E.M."/>
            <person name="Sheffield V.C."/>
        </authorList>
    </citation>
    <scope>NUCLEOTIDE SEQUENCE [MRNA] (ISOFORM 1)</scope>
    <scope>VARIANT BBS1 ARG-390</scope>
</reference>
<reference key="2">
    <citation type="journal article" date="2004" name="Nat. Genet.">
        <title>Complete sequencing and characterization of 21,243 full-length human cDNAs.</title>
        <authorList>
            <person name="Ota T."/>
            <person name="Suzuki Y."/>
            <person name="Nishikawa T."/>
            <person name="Otsuki T."/>
            <person name="Sugiyama T."/>
            <person name="Irie R."/>
            <person name="Wakamatsu A."/>
            <person name="Hayashi K."/>
            <person name="Sato H."/>
            <person name="Nagai K."/>
            <person name="Kimura K."/>
            <person name="Makita H."/>
            <person name="Sekine M."/>
            <person name="Obayashi M."/>
            <person name="Nishi T."/>
            <person name="Shibahara T."/>
            <person name="Tanaka T."/>
            <person name="Ishii S."/>
            <person name="Yamamoto J."/>
            <person name="Saito K."/>
            <person name="Kawai Y."/>
            <person name="Isono Y."/>
            <person name="Nakamura Y."/>
            <person name="Nagahari K."/>
            <person name="Murakami K."/>
            <person name="Yasuda T."/>
            <person name="Iwayanagi T."/>
            <person name="Wagatsuma M."/>
            <person name="Shiratori A."/>
            <person name="Sudo H."/>
            <person name="Hosoiri T."/>
            <person name="Kaku Y."/>
            <person name="Kodaira H."/>
            <person name="Kondo H."/>
            <person name="Sugawara M."/>
            <person name="Takahashi M."/>
            <person name="Kanda K."/>
            <person name="Yokoi T."/>
            <person name="Furuya T."/>
            <person name="Kikkawa E."/>
            <person name="Omura Y."/>
            <person name="Abe K."/>
            <person name="Kamihara K."/>
            <person name="Katsuta N."/>
            <person name="Sato K."/>
            <person name="Tanikawa M."/>
            <person name="Yamazaki M."/>
            <person name="Ninomiya K."/>
            <person name="Ishibashi T."/>
            <person name="Yamashita H."/>
            <person name="Murakawa K."/>
            <person name="Fujimori K."/>
            <person name="Tanai H."/>
            <person name="Kimata M."/>
            <person name="Watanabe M."/>
            <person name="Hiraoka S."/>
            <person name="Chiba Y."/>
            <person name="Ishida S."/>
            <person name="Ono Y."/>
            <person name="Takiguchi S."/>
            <person name="Watanabe S."/>
            <person name="Yosida M."/>
            <person name="Hotuta T."/>
            <person name="Kusano J."/>
            <person name="Kanehori K."/>
            <person name="Takahashi-Fujii A."/>
            <person name="Hara H."/>
            <person name="Tanase T.-O."/>
            <person name="Nomura Y."/>
            <person name="Togiya S."/>
            <person name="Komai F."/>
            <person name="Hara R."/>
            <person name="Takeuchi K."/>
            <person name="Arita M."/>
            <person name="Imose N."/>
            <person name="Musashino K."/>
            <person name="Yuuki H."/>
            <person name="Oshima A."/>
            <person name="Sasaki N."/>
            <person name="Aotsuka S."/>
            <person name="Yoshikawa Y."/>
            <person name="Matsunawa H."/>
            <person name="Ichihara T."/>
            <person name="Shiohata N."/>
            <person name="Sano S."/>
            <person name="Moriya S."/>
            <person name="Momiyama H."/>
            <person name="Satoh N."/>
            <person name="Takami S."/>
            <person name="Terashima Y."/>
            <person name="Suzuki O."/>
            <person name="Nakagawa S."/>
            <person name="Senoh A."/>
            <person name="Mizoguchi H."/>
            <person name="Goto Y."/>
            <person name="Shimizu F."/>
            <person name="Wakebe H."/>
            <person name="Hishigaki H."/>
            <person name="Watanabe T."/>
            <person name="Sugiyama A."/>
            <person name="Takemoto M."/>
            <person name="Kawakami B."/>
            <person name="Yamazaki M."/>
            <person name="Watanabe K."/>
            <person name="Kumagai A."/>
            <person name="Itakura S."/>
            <person name="Fukuzumi Y."/>
            <person name="Fujimori Y."/>
            <person name="Komiyama M."/>
            <person name="Tashiro H."/>
            <person name="Tanigami A."/>
            <person name="Fujiwara T."/>
            <person name="Ono T."/>
            <person name="Yamada K."/>
            <person name="Fujii Y."/>
            <person name="Ozaki K."/>
            <person name="Hirao M."/>
            <person name="Ohmori Y."/>
            <person name="Kawabata A."/>
            <person name="Hikiji T."/>
            <person name="Kobatake N."/>
            <person name="Inagaki H."/>
            <person name="Ikema Y."/>
            <person name="Okamoto S."/>
            <person name="Okitani R."/>
            <person name="Kawakami T."/>
            <person name="Noguchi S."/>
            <person name="Itoh T."/>
            <person name="Shigeta K."/>
            <person name="Senba T."/>
            <person name="Matsumura K."/>
            <person name="Nakajima Y."/>
            <person name="Mizuno T."/>
            <person name="Morinaga M."/>
            <person name="Sasaki M."/>
            <person name="Togashi T."/>
            <person name="Oyama M."/>
            <person name="Hata H."/>
            <person name="Watanabe M."/>
            <person name="Komatsu T."/>
            <person name="Mizushima-Sugano J."/>
            <person name="Satoh T."/>
            <person name="Shirai Y."/>
            <person name="Takahashi Y."/>
            <person name="Nakagawa K."/>
            <person name="Okumura K."/>
            <person name="Nagase T."/>
            <person name="Nomura N."/>
            <person name="Kikuchi H."/>
            <person name="Masuho Y."/>
            <person name="Yamashita R."/>
            <person name="Nakai K."/>
            <person name="Yada T."/>
            <person name="Nakamura Y."/>
            <person name="Ohara O."/>
            <person name="Isogai T."/>
            <person name="Sugano S."/>
        </authorList>
    </citation>
    <scope>NUCLEOTIDE SEQUENCE [LARGE SCALE MRNA] (ISOFORM 3)</scope>
</reference>
<reference key="3">
    <citation type="journal article" date="2006" name="Nature">
        <title>Human chromosome 11 DNA sequence and analysis including novel gene identification.</title>
        <authorList>
            <person name="Taylor T.D."/>
            <person name="Noguchi H."/>
            <person name="Totoki Y."/>
            <person name="Toyoda A."/>
            <person name="Kuroki Y."/>
            <person name="Dewar K."/>
            <person name="Lloyd C."/>
            <person name="Itoh T."/>
            <person name="Takeda T."/>
            <person name="Kim D.-W."/>
            <person name="She X."/>
            <person name="Barlow K.F."/>
            <person name="Bloom T."/>
            <person name="Bruford E."/>
            <person name="Chang J.L."/>
            <person name="Cuomo C.A."/>
            <person name="Eichler E."/>
            <person name="FitzGerald M.G."/>
            <person name="Jaffe D.B."/>
            <person name="LaButti K."/>
            <person name="Nicol R."/>
            <person name="Park H.-S."/>
            <person name="Seaman C."/>
            <person name="Sougnez C."/>
            <person name="Yang X."/>
            <person name="Zimmer A.R."/>
            <person name="Zody M.C."/>
            <person name="Birren B.W."/>
            <person name="Nusbaum C."/>
            <person name="Fujiyama A."/>
            <person name="Hattori M."/>
            <person name="Rogers J."/>
            <person name="Lander E.S."/>
            <person name="Sakaki Y."/>
        </authorList>
    </citation>
    <scope>NUCLEOTIDE SEQUENCE [LARGE SCALE GENOMIC DNA]</scope>
</reference>
<reference key="4">
    <citation type="journal article" date="2004" name="Genome Res.">
        <title>The status, quality, and expansion of the NIH full-length cDNA project: the Mammalian Gene Collection (MGC).</title>
        <authorList>
            <consortium name="The MGC Project Team"/>
        </authorList>
    </citation>
    <scope>NUCLEOTIDE SEQUENCE [LARGE SCALE MRNA] (ISOFORMS 1 AND 3)</scope>
</reference>
<reference key="5">
    <citation type="journal article" date="2006" name="Nature">
        <title>Dissection of epistasis in oligogenic Bardet-Biedl syndrome.</title>
        <authorList>
            <person name="Badano J.L."/>
            <person name="Leitch C.C."/>
            <person name="Ansley S.J."/>
            <person name="May-Simera H."/>
            <person name="Lawson S."/>
            <person name="Lewis R.A."/>
            <person name="Beales P.L."/>
            <person name="Dietz H.C."/>
            <person name="Fisher S."/>
            <person name="Katsanis N."/>
        </authorList>
    </citation>
    <scope>INTERACTION WITH CCDC28B</scope>
</reference>
<reference key="6">
    <citation type="journal article" date="2007" name="Cell">
        <title>A core complex of BBS proteins cooperates with the GTPase Rab8 to promote ciliary membrane biogenesis.</title>
        <authorList>
            <person name="Nachury M.V."/>
            <person name="Loktev A.V."/>
            <person name="Zhang Q."/>
            <person name="Westlake C.J."/>
            <person name="Peraenen J."/>
            <person name="Merdes A."/>
            <person name="Slusarski D.C."/>
            <person name="Scheller R.H."/>
            <person name="Bazan J.F."/>
            <person name="Sheffield V.C."/>
            <person name="Jackson P.K."/>
        </authorList>
    </citation>
    <scope>IDENTIFICATION BY MASS SPECTROMETRY</scope>
    <scope>SUBUNIT</scope>
    <scope>FUNCTION</scope>
    <scope>SUBCELLULAR LOCATION</scope>
    <scope>INTERACTION WITH RAB3IP</scope>
</reference>
<reference key="7">
    <citation type="journal article" date="2008" name="Cell Motil. Cytoskeleton">
        <title>Novel interaction partners of Bardet-Biedl syndrome proteins.</title>
        <authorList>
            <person name="Oeffner F."/>
            <person name="Moch C."/>
            <person name="Neundorf A."/>
            <person name="Hofmann J."/>
            <person name="Koch M."/>
            <person name="Grzeschik K.H."/>
        </authorList>
    </citation>
    <scope>INTERACTION WITH ALDOB</scope>
</reference>
<reference key="8">
    <citation type="journal article" date="2009" name="Anal. Chem.">
        <title>Lys-N and trypsin cover complementary parts of the phosphoproteome in a refined SCX-based approach.</title>
        <authorList>
            <person name="Gauci S."/>
            <person name="Helbig A.O."/>
            <person name="Slijper M."/>
            <person name="Krijgsveld J."/>
            <person name="Heck A.J."/>
            <person name="Mohammed S."/>
        </authorList>
    </citation>
    <scope>ACETYLATION [LARGE SCALE ANALYSIS] AT ALA-2</scope>
    <scope>CLEAVAGE OF INITIATOR METHIONINE [LARGE SCALE ANALYSIS]</scope>
    <scope>IDENTIFICATION BY MASS SPECTROMETRY [LARGE SCALE ANALYSIS]</scope>
</reference>
<reference key="9">
    <citation type="journal article" date="2011" name="PLoS Genet.">
        <title>A novel protein LZTFL1 regulates ciliary trafficking of the BBSome and Smoothened.</title>
        <authorList>
            <person name="Seo S."/>
            <person name="Zhang Q."/>
            <person name="Bugge K."/>
            <person name="Breslow D.K."/>
            <person name="Searby C.C."/>
            <person name="Nachury M.V."/>
            <person name="Sheffield V.C."/>
        </authorList>
    </citation>
    <scope>FUNCTION</scope>
    <scope>FUNCTION OF THE BBSOME COMPLEX</scope>
    <scope>IDENTIFICATION IN THE BBSOME COMPLEX</scope>
    <scope>SUBCELLULAR LOCATION</scope>
</reference>
<reference key="10">
    <citation type="journal article" date="2014" name="Hum. Mol. Genet.">
        <title>Bardet-Biedl syndrome proteins 1 and 3 regulate the ciliary trafficking of polycystic kidney disease 1 protein.</title>
        <authorList>
            <person name="Su X."/>
            <person name="Driscoll K."/>
            <person name="Yao G."/>
            <person name="Raed A."/>
            <person name="Wu M."/>
            <person name="Beales P.L."/>
            <person name="Zhou J."/>
        </authorList>
    </citation>
    <scope>INTERACTION WITH PKD1</scope>
</reference>
<reference key="11">
    <citation type="journal article" date="2003" name="Am. J. Hum. Genet.">
        <title>Evaluation of complex inheritance involving the most common Bardet-Biedl syndrome locus (BBS1).</title>
        <authorList>
            <person name="Mykytyn K."/>
            <person name="Nishimura D.Y."/>
            <person name="Searby C.C."/>
            <person name="Beck G."/>
            <person name="Bugge K."/>
            <person name="Haines H.L."/>
            <person name="Cornier A.S."/>
            <person name="Cox G.F."/>
            <person name="Fulton A.B."/>
            <person name="Carmi R."/>
            <person name="Iannaccone A."/>
            <person name="Jacobson S.G."/>
            <person name="Weleber R.G."/>
            <person name="Wright A.F."/>
            <person name="Riise R."/>
            <person name="Hennekam R.C.M."/>
            <person name="Lueleci G."/>
            <person name="Berker-Karauzum S."/>
            <person name="Biesecker L.G."/>
            <person name="Stone E.M."/>
            <person name="Sheffield V.C."/>
        </authorList>
    </citation>
    <scope>VARIANTS BBS1 200-ILE-THR-201 DEL; ARG-390 AND PRO-518</scope>
</reference>
<reference key="12">
    <citation type="journal article" date="2003" name="Am. J. Hum. Genet.">
        <title>Identification of a novel Bardet-Biedl syndrome protein, BBS7, that shares structural features with BBS1 and BBS2.</title>
        <authorList>
            <person name="Badano J.L."/>
            <person name="Ansley S.J."/>
            <person name="Leitch C.C."/>
            <person name="Lewis R.A."/>
            <person name="Lupski J.R."/>
            <person name="Katsanis N."/>
        </authorList>
    </citation>
    <scope>VARIANT BBS1 LYS-234</scope>
</reference>
<reference key="13">
    <citation type="journal article" date="2003" name="Am. J. Hum. Genet.">
        <title>Genetic interaction of BBS1 mutations with alleles at other BBS loci can result in non-Mendelian Bardet-Biedl syndrome.</title>
        <authorList>
            <person name="Beales P.L."/>
            <person name="Badano J.L."/>
            <person name="Ross A.J."/>
            <person name="Ansley S.J."/>
            <person name="Hoskins B.E."/>
            <person name="Kirsten B."/>
            <person name="Mein C.A."/>
            <person name="Froguel P."/>
            <person name="Scambler P.J."/>
            <person name="Lewis R.A."/>
            <person name="Lupski J.R."/>
            <person name="Katsanis N."/>
        </authorList>
    </citation>
    <scope>VARIANTS BBS1 ARG-35; GLU-53; ASN-148; LYS-234; SER-305; ILE-389 DEL; ARG-390; SER-434; HIS-503 AND GLN-518</scope>
</reference>
<reference key="14">
    <citation type="journal article" date="2003" name="J. Med. Genet.">
        <title>Further support for digenic inheritance in Bardet-Biedl syndrome.</title>
        <authorList>
            <person name="Fauser S."/>
            <person name="Munz M."/>
            <person name="Besch D."/>
        </authorList>
    </citation>
    <scope>VARIANTS BBS1 ARG-390 AND PRO-518</scope>
</reference>
<reference key="15">
    <citation type="journal article" date="2005" name="Eur. J. Hum. Genet.">
        <title>Testing for triallelism: analysis of six BBS genes in a Bardet-Biedl syndrome family cohort.</title>
        <authorList>
            <person name="Hichri H."/>
            <person name="Stoetzel C."/>
            <person name="Laurier V."/>
            <person name="Caron S."/>
            <person name="Sigaudy S."/>
            <person name="Sarda P."/>
            <person name="Hamel C."/>
            <person name="Martin-Coignard D."/>
            <person name="Gilles M."/>
            <person name="Leheup B."/>
            <person name="Holder M."/>
            <person name="Kaplan J."/>
            <person name="Bitoun P."/>
            <person name="Lacombe D."/>
            <person name="Verloes A."/>
            <person name="Bonneau D."/>
            <person name="Perrin-Schmitt F."/>
            <person name="Brandt C."/>
            <person name="Besancon A.-F."/>
            <person name="Mandel J.-L."/>
            <person name="Cossee M."/>
            <person name="Dollfus H."/>
        </authorList>
    </citation>
    <scope>VARIANTS BBS1 GLN-160 AND ARG-390</scope>
</reference>
<reference key="16">
    <citation type="journal article" date="2011" name="Hum. Genet.">
        <title>Mutation analysis in Bardet-Biedl syndrome by DNA pooling and massively parallel resequencing in 105 individuals.</title>
        <authorList>
            <person name="Janssen S."/>
            <person name="Ramaswami G."/>
            <person name="Davis E.E."/>
            <person name="Hurd T."/>
            <person name="Airik R."/>
            <person name="Kasanuki J.M."/>
            <person name="Van Der Kraak L."/>
            <person name="Allen S.J."/>
            <person name="Beales P.L."/>
            <person name="Katsanis N."/>
            <person name="Otto E.A."/>
            <person name="Hildebrandt F."/>
        </authorList>
    </citation>
    <scope>VARIANTS VAL-206 AND LEU-245</scope>
    <scope>VARIANT BBS1 ARG-390</scope>
</reference>
<reference key="17">
    <citation type="journal article" date="2011" name="Nat. Genet.">
        <title>TTC21B contributes both causal and modifying alleles across the ciliopathy spectrum.</title>
        <authorList>
            <person name="Davis E.E."/>
            <person name="Zhang Q."/>
            <person name="Liu Q."/>
            <person name="Diplas B.H."/>
            <person name="Davey L.M."/>
            <person name="Hartley J."/>
            <person name="Stoetzel C."/>
            <person name="Szymanska K."/>
            <person name="Ramaswami G."/>
            <person name="Logan C.V."/>
            <person name="Muzny D.M."/>
            <person name="Young A.C."/>
            <person name="Wheeler D.A."/>
            <person name="Cruz P."/>
            <person name="Morgan M."/>
            <person name="Lewis L.R."/>
            <person name="Cherukuri P."/>
            <person name="Maskeri B."/>
            <person name="Hansen N.F."/>
            <person name="Mullikin J.C."/>
            <person name="Blakesley R.W."/>
            <person name="Bouffard G.G."/>
            <person name="Gyapay G."/>
            <person name="Rieger S."/>
            <person name="Tonshoff B."/>
            <person name="Kern I."/>
            <person name="Soliman N.A."/>
            <person name="Neuhaus T.J."/>
            <person name="Swoboda K.J."/>
            <person name="Kayserili H."/>
            <person name="Gallagher T.E."/>
            <person name="Lewis R.A."/>
            <person name="Bergmann C."/>
            <person name="Otto E.A."/>
            <person name="Saunier S."/>
            <person name="Scambler P.J."/>
            <person name="Beales P.L."/>
            <person name="Gleeson J.G."/>
            <person name="Maher E.R."/>
            <person name="Attie-Bitach T."/>
            <person name="Dollfus H."/>
            <person name="Johnson C.A."/>
            <person name="Green E.D."/>
            <person name="Gibbs R.A."/>
            <person name="Hildebrandt F."/>
            <person name="Pierce E.A."/>
            <person name="Katsanis N."/>
        </authorList>
    </citation>
    <scope>VARIANT ASP-559</scope>
    <scope>INVOLVEMENT IN CILIOPATHIES</scope>
</reference>
<reference key="18">
    <citation type="journal article" date="2011" name="Hum. Mutat.">
        <title>BBS genotype-phenotype assessment of a multiethnic patient cohort calls for a revision of the disease definition.</title>
        <authorList>
            <person name="Deveault C."/>
            <person name="Billingsley G."/>
            <person name="Duncan J.L."/>
            <person name="Bin J."/>
            <person name="Theal R."/>
            <person name="Vincent A."/>
            <person name="Fieggen K.J."/>
            <person name="Gerth C."/>
            <person name="Noordeh N."/>
            <person name="Traboulsi E.I."/>
            <person name="Fishman G.A."/>
            <person name="Chitayat D."/>
            <person name="Knueppel T."/>
            <person name="Millan J.M."/>
            <person name="Munier F.L."/>
            <person name="Kennedy D."/>
            <person name="Jacobson S.G."/>
            <person name="Innes A.M."/>
            <person name="Mitchell G.A."/>
            <person name="Boycott K."/>
            <person name="Heon E."/>
        </authorList>
    </citation>
    <scope>VARIANTS BBS1 GLN-160; THR-330; ARG-390 AND ASN-524 DEL</scope>
</reference>
<dbReference type="EMBL" id="AF503941">
    <property type="protein sequence ID" value="AAM92770.1"/>
    <property type="molecule type" value="mRNA"/>
</dbReference>
<dbReference type="EMBL" id="AK027645">
    <property type="protein sequence ID" value="BAB55261.1"/>
    <property type="molecule type" value="mRNA"/>
</dbReference>
<dbReference type="EMBL" id="AP002748">
    <property type="status" value="NOT_ANNOTATED_CDS"/>
    <property type="molecule type" value="Genomic_DNA"/>
</dbReference>
<dbReference type="EMBL" id="BC109064">
    <property type="protein sequence ID" value="AAI09065.1"/>
    <property type="molecule type" value="mRNA"/>
</dbReference>
<dbReference type="EMBL" id="BC109065">
    <property type="protein sequence ID" value="AAI09066.1"/>
    <property type="molecule type" value="mRNA"/>
</dbReference>
<dbReference type="CCDS" id="CCDS8142.1">
    <molecule id="Q8NFJ9-1"/>
</dbReference>
<dbReference type="RefSeq" id="NP_078925.3">
    <molecule id="Q8NFJ9-1"/>
    <property type="nucleotide sequence ID" value="NM_024649.4"/>
</dbReference>
<dbReference type="PDB" id="6XT9">
    <property type="method" value="EM"/>
    <property type="resolution" value="3.80 A"/>
    <property type="chains" value="A=1-593"/>
</dbReference>
<dbReference type="PDBsum" id="6XT9"/>
<dbReference type="EMDB" id="EMD-10617"/>
<dbReference type="SMR" id="Q8NFJ9"/>
<dbReference type="BioGRID" id="107058">
    <property type="interactions" value="128"/>
</dbReference>
<dbReference type="ComplexPortal" id="CPX-1908">
    <property type="entry name" value="BBSome complex"/>
</dbReference>
<dbReference type="CORUM" id="Q8NFJ9"/>
<dbReference type="DIP" id="DIP-46564N"/>
<dbReference type="FunCoup" id="Q8NFJ9">
    <property type="interactions" value="600"/>
</dbReference>
<dbReference type="IntAct" id="Q8NFJ9">
    <property type="interactions" value="116"/>
</dbReference>
<dbReference type="STRING" id="9606.ENSP00000317469"/>
<dbReference type="TCDB" id="3.A.33.1.1">
    <property type="family name" value="the bbsome complex (bbsome) family"/>
</dbReference>
<dbReference type="iPTMnet" id="Q8NFJ9"/>
<dbReference type="PhosphoSitePlus" id="Q8NFJ9"/>
<dbReference type="BioMuta" id="BBS1"/>
<dbReference type="DMDM" id="38257662"/>
<dbReference type="jPOST" id="Q8NFJ9"/>
<dbReference type="MassIVE" id="Q8NFJ9"/>
<dbReference type="PaxDb" id="9606-ENSP00000317469"/>
<dbReference type="PeptideAtlas" id="Q8NFJ9"/>
<dbReference type="ProteomicsDB" id="61606"/>
<dbReference type="ProteomicsDB" id="73319">
    <molecule id="Q8NFJ9-1"/>
</dbReference>
<dbReference type="ProteomicsDB" id="73320">
    <molecule id="Q8NFJ9-2"/>
</dbReference>
<dbReference type="Pumba" id="Q8NFJ9"/>
<dbReference type="Antibodypedia" id="30172">
    <property type="antibodies" value="92 antibodies from 24 providers"/>
</dbReference>
<dbReference type="DNASU" id="582"/>
<dbReference type="Ensembl" id="ENST00000318312.12">
    <molecule id="Q8NFJ9-1"/>
    <property type="protein sequence ID" value="ENSP00000317469.7"/>
    <property type="gene ID" value="ENSG00000174483.20"/>
</dbReference>
<dbReference type="Ensembl" id="ENST00000393994.4">
    <molecule id="Q8NFJ9-3"/>
    <property type="protein sequence ID" value="ENSP00000377563.2"/>
    <property type="gene ID" value="ENSG00000174483.20"/>
</dbReference>
<dbReference type="GeneID" id="582"/>
<dbReference type="KEGG" id="hsa:582"/>
<dbReference type="MANE-Select" id="ENST00000318312.12">
    <property type="protein sequence ID" value="ENSP00000317469.7"/>
    <property type="RefSeq nucleotide sequence ID" value="NM_024649.5"/>
    <property type="RefSeq protein sequence ID" value="NP_078925.3"/>
</dbReference>
<dbReference type="UCSC" id="uc001oij.2">
    <molecule id="Q8NFJ9-1"/>
    <property type="organism name" value="human"/>
</dbReference>
<dbReference type="AGR" id="HGNC:966"/>
<dbReference type="CTD" id="582"/>
<dbReference type="DisGeNET" id="582"/>
<dbReference type="GeneCards" id="BBS1"/>
<dbReference type="GeneReviews" id="BBS1"/>
<dbReference type="HGNC" id="HGNC:966">
    <property type="gene designation" value="BBS1"/>
</dbReference>
<dbReference type="HPA" id="ENSG00000174483">
    <property type="expression patterns" value="Low tissue specificity"/>
</dbReference>
<dbReference type="MalaCards" id="BBS1"/>
<dbReference type="MIM" id="209900">
    <property type="type" value="phenotype"/>
</dbReference>
<dbReference type="MIM" id="209901">
    <property type="type" value="gene"/>
</dbReference>
<dbReference type="neXtProt" id="NX_Q8NFJ9"/>
<dbReference type="OpenTargets" id="ENSG00000174483"/>
<dbReference type="OpenTargets" id="ENSG00000256349"/>
<dbReference type="Orphanet" id="110">
    <property type="disease" value="Bardet-Biedl syndrome"/>
</dbReference>
<dbReference type="Orphanet" id="791">
    <property type="disease" value="Retinitis pigmentosa"/>
</dbReference>
<dbReference type="PharmGKB" id="PA25275"/>
<dbReference type="VEuPathDB" id="HostDB:ENSG00000174483"/>
<dbReference type="eggNOG" id="ENOG502QS2X">
    <property type="taxonomic scope" value="Eukaryota"/>
</dbReference>
<dbReference type="GeneTree" id="ENSGT00390000005232"/>
<dbReference type="HOGENOM" id="CLU_032988_1_0_1"/>
<dbReference type="InParanoid" id="Q8NFJ9"/>
<dbReference type="OMA" id="TWIEMAN"/>
<dbReference type="OrthoDB" id="10259809at2759"/>
<dbReference type="PAN-GO" id="Q8NFJ9">
    <property type="GO annotations" value="7 GO annotations based on evolutionary models"/>
</dbReference>
<dbReference type="PhylomeDB" id="Q8NFJ9"/>
<dbReference type="TreeFam" id="TF312892"/>
<dbReference type="PathwayCommons" id="Q8NFJ9"/>
<dbReference type="Reactome" id="R-HSA-5620922">
    <property type="pathway name" value="BBSome-mediated cargo-targeting to cilium"/>
</dbReference>
<dbReference type="SignaLink" id="Q8NFJ9"/>
<dbReference type="SIGNOR" id="Q8NFJ9"/>
<dbReference type="BioGRID-ORCS" id="582">
    <property type="hits" value="19 hits in 1150 CRISPR screens"/>
</dbReference>
<dbReference type="CD-CODE" id="8C2F96ED">
    <property type="entry name" value="Centrosome"/>
</dbReference>
<dbReference type="ChiTaRS" id="BBS1">
    <property type="organism name" value="human"/>
</dbReference>
<dbReference type="GeneWiki" id="BBS1"/>
<dbReference type="GenomeRNAi" id="582"/>
<dbReference type="Pharos" id="Q8NFJ9">
    <property type="development level" value="Tbio"/>
</dbReference>
<dbReference type="PRO" id="PR:Q8NFJ9"/>
<dbReference type="Proteomes" id="UP000005640">
    <property type="component" value="Chromosome 11"/>
</dbReference>
<dbReference type="RNAct" id="Q8NFJ9">
    <property type="molecule type" value="protein"/>
</dbReference>
<dbReference type="Bgee" id="ENSG00000174483">
    <property type="expression patterns" value="Expressed in right uterine tube and 99 other cell types or tissues"/>
</dbReference>
<dbReference type="ExpressionAtlas" id="Q8NFJ9">
    <property type="expression patterns" value="baseline and differential"/>
</dbReference>
<dbReference type="GO" id="GO:0005930">
    <property type="term" value="C:axoneme"/>
    <property type="evidence" value="ECO:0000318"/>
    <property type="project" value="GO_Central"/>
</dbReference>
<dbReference type="GO" id="GO:0034464">
    <property type="term" value="C:BBSome"/>
    <property type="evidence" value="ECO:0000314"/>
    <property type="project" value="UniProtKB"/>
</dbReference>
<dbReference type="GO" id="GO:0034451">
    <property type="term" value="C:centriolar satellite"/>
    <property type="evidence" value="ECO:0007669"/>
    <property type="project" value="UniProtKB-SubCell"/>
</dbReference>
<dbReference type="GO" id="GO:0005813">
    <property type="term" value="C:centrosome"/>
    <property type="evidence" value="ECO:0000314"/>
    <property type="project" value="SYSCILIA_CCNET"/>
</dbReference>
<dbReference type="GO" id="GO:0060170">
    <property type="term" value="C:ciliary membrane"/>
    <property type="evidence" value="ECO:0000314"/>
    <property type="project" value="ComplexPortal"/>
</dbReference>
<dbReference type="GO" id="GO:0005829">
    <property type="term" value="C:cytosol"/>
    <property type="evidence" value="ECO:0000304"/>
    <property type="project" value="Reactome"/>
</dbReference>
<dbReference type="GO" id="GO:0031514">
    <property type="term" value="C:motile cilium"/>
    <property type="evidence" value="ECO:0007669"/>
    <property type="project" value="Ensembl"/>
</dbReference>
<dbReference type="GO" id="GO:0005113">
    <property type="term" value="F:patched binding"/>
    <property type="evidence" value="ECO:0000353"/>
    <property type="project" value="MGI"/>
</dbReference>
<dbReference type="GO" id="GO:0051219">
    <property type="term" value="F:phosphoprotein binding"/>
    <property type="evidence" value="ECO:0007669"/>
    <property type="project" value="Ensembl"/>
</dbReference>
<dbReference type="GO" id="GO:0061629">
    <property type="term" value="F:RNA polymerase II-specific DNA-binding transcription factor binding"/>
    <property type="evidence" value="ECO:0000353"/>
    <property type="project" value="MGI"/>
</dbReference>
<dbReference type="GO" id="GO:0005119">
    <property type="term" value="F:smoothened binding"/>
    <property type="evidence" value="ECO:0000353"/>
    <property type="project" value="MGI"/>
</dbReference>
<dbReference type="GO" id="GO:0030534">
    <property type="term" value="P:adult behavior"/>
    <property type="evidence" value="ECO:0007669"/>
    <property type="project" value="Ensembl"/>
</dbReference>
<dbReference type="GO" id="GO:0048854">
    <property type="term" value="P:brain morphogenesis"/>
    <property type="evidence" value="ECO:0007669"/>
    <property type="project" value="Ensembl"/>
</dbReference>
<dbReference type="GO" id="GO:0051216">
    <property type="term" value="P:cartilage development"/>
    <property type="evidence" value="ECO:0007669"/>
    <property type="project" value="Ensembl"/>
</dbReference>
<dbReference type="GO" id="GO:0021987">
    <property type="term" value="P:cerebral cortex development"/>
    <property type="evidence" value="ECO:0007669"/>
    <property type="project" value="Ensembl"/>
</dbReference>
<dbReference type="GO" id="GO:0060271">
    <property type="term" value="P:cilium assembly"/>
    <property type="evidence" value="ECO:0000315"/>
    <property type="project" value="BHF-UCL"/>
</dbReference>
<dbReference type="GO" id="GO:0016358">
    <property type="term" value="P:dendrite development"/>
    <property type="evidence" value="ECO:0007669"/>
    <property type="project" value="Ensembl"/>
</dbReference>
<dbReference type="GO" id="GO:0045444">
    <property type="term" value="P:fat cell differentiation"/>
    <property type="evidence" value="ECO:0007669"/>
    <property type="project" value="Ensembl"/>
</dbReference>
<dbReference type="GO" id="GO:0009566">
    <property type="term" value="P:fertilization"/>
    <property type="evidence" value="ECO:0007669"/>
    <property type="project" value="Ensembl"/>
</dbReference>
<dbReference type="GO" id="GO:0043001">
    <property type="term" value="P:Golgi to plasma membrane protein transport"/>
    <property type="evidence" value="ECO:0000315"/>
    <property type="project" value="MGI"/>
</dbReference>
<dbReference type="GO" id="GO:0021766">
    <property type="term" value="P:hippocampus development"/>
    <property type="evidence" value="ECO:0007669"/>
    <property type="project" value="Ensembl"/>
</dbReference>
<dbReference type="GO" id="GO:0042445">
    <property type="term" value="P:hormone metabolic process"/>
    <property type="evidence" value="ECO:0007669"/>
    <property type="project" value="Ensembl"/>
</dbReference>
<dbReference type="GO" id="GO:0006629">
    <property type="term" value="P:lipid metabolic process"/>
    <property type="evidence" value="ECO:0007669"/>
    <property type="project" value="Ensembl"/>
</dbReference>
<dbReference type="GO" id="GO:0000226">
    <property type="term" value="P:microtubule cytoskeleton organization"/>
    <property type="evidence" value="ECO:0007669"/>
    <property type="project" value="Ensembl"/>
</dbReference>
<dbReference type="GO" id="GO:0061351">
    <property type="term" value="P:neural precursor cell proliferation"/>
    <property type="evidence" value="ECO:0007669"/>
    <property type="project" value="Ensembl"/>
</dbReference>
<dbReference type="GO" id="GO:0001764">
    <property type="term" value="P:neuron migration"/>
    <property type="evidence" value="ECO:0007669"/>
    <property type="project" value="Ensembl"/>
</dbReference>
<dbReference type="GO" id="GO:1905515">
    <property type="term" value="P:non-motile cilium assembly"/>
    <property type="evidence" value="ECO:0000315"/>
    <property type="project" value="BHF-UCL"/>
</dbReference>
<dbReference type="GO" id="GO:0042048">
    <property type="term" value="P:olfactory behavior"/>
    <property type="evidence" value="ECO:0007669"/>
    <property type="project" value="Ensembl"/>
</dbReference>
<dbReference type="GO" id="GO:0045494">
    <property type="term" value="P:photoreceptor cell maintenance"/>
    <property type="evidence" value="ECO:0000315"/>
    <property type="project" value="BHF-UCL"/>
</dbReference>
<dbReference type="GO" id="GO:0008594">
    <property type="term" value="P:photoreceptor cell morphogenesis"/>
    <property type="evidence" value="ECO:0007669"/>
    <property type="project" value="Ensembl"/>
</dbReference>
<dbReference type="GO" id="GO:0061512">
    <property type="term" value="P:protein localization to cilium"/>
    <property type="evidence" value="ECO:0000315"/>
    <property type="project" value="GO_Central"/>
</dbReference>
<dbReference type="GO" id="GO:0060296">
    <property type="term" value="P:regulation of cilium beat frequency involved in ciliary motility"/>
    <property type="evidence" value="ECO:0007669"/>
    <property type="project" value="Ensembl"/>
</dbReference>
<dbReference type="GO" id="GO:0034976">
    <property type="term" value="P:response to endoplasmic reticulum stress"/>
    <property type="evidence" value="ECO:0007669"/>
    <property type="project" value="Ensembl"/>
</dbReference>
<dbReference type="GO" id="GO:0060041">
    <property type="term" value="P:retina development in camera-type eye"/>
    <property type="evidence" value="ECO:0007669"/>
    <property type="project" value="Ensembl"/>
</dbReference>
<dbReference type="GO" id="GO:0007608">
    <property type="term" value="P:sensory perception of smell"/>
    <property type="evidence" value="ECO:0007669"/>
    <property type="project" value="UniProtKB-KW"/>
</dbReference>
<dbReference type="GO" id="GO:0021756">
    <property type="term" value="P:striatum development"/>
    <property type="evidence" value="ECO:0007669"/>
    <property type="project" value="Ensembl"/>
</dbReference>
<dbReference type="GO" id="GO:0021591">
    <property type="term" value="P:ventricular system development"/>
    <property type="evidence" value="ECO:0007669"/>
    <property type="project" value="Ensembl"/>
</dbReference>
<dbReference type="GO" id="GO:0007601">
    <property type="term" value="P:visual perception"/>
    <property type="evidence" value="ECO:0007669"/>
    <property type="project" value="UniProtKB-KW"/>
</dbReference>
<dbReference type="FunFam" id="2.130.10.10:FF:002248">
    <property type="entry name" value="Bardet-Biedl syndrome 1"/>
    <property type="match status" value="1"/>
</dbReference>
<dbReference type="InterPro" id="IPR028784">
    <property type="entry name" value="BBS1"/>
</dbReference>
<dbReference type="InterPro" id="IPR032728">
    <property type="entry name" value="BBS1_N"/>
</dbReference>
<dbReference type="InterPro" id="IPR056419">
    <property type="entry name" value="GAE_BBS1"/>
</dbReference>
<dbReference type="InterPro" id="IPR011047">
    <property type="entry name" value="Quinoprotein_ADH-like_sf"/>
</dbReference>
<dbReference type="PANTHER" id="PTHR20870">
    <property type="entry name" value="BARDET-BIEDL SYNDROME 1 PROTEIN"/>
    <property type="match status" value="1"/>
</dbReference>
<dbReference type="PANTHER" id="PTHR20870:SF0">
    <property type="entry name" value="BARDET-BIEDL SYNDROME 1 PROTEIN"/>
    <property type="match status" value="1"/>
</dbReference>
<dbReference type="Pfam" id="PF14779">
    <property type="entry name" value="BBS1"/>
    <property type="match status" value="1"/>
</dbReference>
<dbReference type="Pfam" id="PF23304">
    <property type="entry name" value="GAE_BBS1"/>
    <property type="match status" value="1"/>
</dbReference>
<dbReference type="SUPFAM" id="SSF50998">
    <property type="entry name" value="Quinoprotein alcohol dehydrogenase-like"/>
    <property type="match status" value="1"/>
</dbReference>
<evidence type="ECO:0000250" key="1">
    <source>
        <dbReference type="UniProtKB" id="Q3V3N7"/>
    </source>
</evidence>
<evidence type="ECO:0000269" key="2">
    <source>
    </source>
</evidence>
<evidence type="ECO:0000269" key="3">
    <source>
    </source>
</evidence>
<evidence type="ECO:0000269" key="4">
    <source>
    </source>
</evidence>
<evidence type="ECO:0000269" key="5">
    <source>
    </source>
</evidence>
<evidence type="ECO:0000269" key="6">
    <source>
    </source>
</evidence>
<evidence type="ECO:0000269" key="7">
    <source>
    </source>
</evidence>
<evidence type="ECO:0000269" key="8">
    <source>
    </source>
</evidence>
<evidence type="ECO:0000269" key="9">
    <source>
    </source>
</evidence>
<evidence type="ECO:0000269" key="10">
    <source>
    </source>
</evidence>
<evidence type="ECO:0000269" key="11">
    <source>
    </source>
</evidence>
<evidence type="ECO:0000269" key="12">
    <source>
    </source>
</evidence>
<evidence type="ECO:0000269" key="13">
    <source>
    </source>
</evidence>
<evidence type="ECO:0000269" key="14">
    <source>
    </source>
</evidence>
<evidence type="ECO:0000269" key="15">
    <source>
    </source>
</evidence>
<evidence type="ECO:0000303" key="16">
    <source>
    </source>
</evidence>
<evidence type="ECO:0000303" key="17">
    <source>
    </source>
</evidence>
<evidence type="ECO:0000305" key="18"/>
<evidence type="ECO:0007744" key="19">
    <source>
    </source>
</evidence>
<sequence length="593" mass="65083">MAAASSSDSDACGAESNEANSKWLDAHYDPMANIHTFSACLALADLHGDGEYKLVVGDLGPGGQQPRLKVLKGPLVMTESPLPALPAAAATFLMEQHEPRTPALALASGPCVYVYKNLRPYFKFSLPQLPPNPLEQDLWNQAKEDRIDPLTLKEMLESIRETAEEPLSIQSLRFLQLELSEMEAFVNQHKSNSIKRQTVITTMTTLKKNLADEDAVSCLVLGTENKELLVLDPEAFTILAKMSLPSVPVFLEVSGQFDVEFRLAAACRNGNIYILRRDSKHPKYCIELSAQPVGLIRVHKVLVVGSTQDSLHGFTHKGKKLWTVQMPAAILTMNLLEQHSRGLQAVMAGLANGEVRIYRDKALLNVIHTPDAVTSLCFGRYGREDNTLIMTTRGGGLIIKILKRTAVFVEGGSEVGPPPAQAMKLNVPRKTRLYVDQTLREREAGTAMHRAFQTDLYLLRLRAARAYLQALESSLSPLSTTAREPLKLHAVVQGLGPTFKLTLHLQNTSTTRPVLGLLVCFLYNEALYSLPRAFFKVPLLVPGLNYPLETFVESLSNKGISDIIKVLVLREGQSAPLLSAHVNMPGSEGLAAA</sequence>
<gene>
    <name type="primary">BBS1</name>
    <name type="synonym">BBS2L2</name>
</gene>